<accession>B2RHV8</accession>
<feature type="chain" id="PRO_1000125079" description="Phosphoenolpyruvate carboxykinase (ATP)">
    <location>
        <begin position="1"/>
        <end position="535"/>
    </location>
</feature>
<feature type="binding site" evidence="1">
    <location>
        <position position="59"/>
    </location>
    <ligand>
        <name>substrate</name>
    </ligand>
</feature>
<feature type="binding site" evidence="1">
    <location>
        <position position="201"/>
    </location>
    <ligand>
        <name>substrate</name>
    </ligand>
</feature>
<feature type="binding site" evidence="1">
    <location>
        <position position="207"/>
    </location>
    <ligand>
        <name>ATP</name>
        <dbReference type="ChEBI" id="CHEBI:30616"/>
    </ligand>
</feature>
<feature type="binding site" evidence="1">
    <location>
        <position position="207"/>
    </location>
    <ligand>
        <name>Mn(2+)</name>
        <dbReference type="ChEBI" id="CHEBI:29035"/>
    </ligand>
</feature>
<feature type="binding site" evidence="1">
    <location>
        <position position="207"/>
    </location>
    <ligand>
        <name>substrate</name>
    </ligand>
</feature>
<feature type="binding site" evidence="1">
    <location>
        <position position="226"/>
    </location>
    <ligand>
        <name>ATP</name>
        <dbReference type="ChEBI" id="CHEBI:30616"/>
    </ligand>
</feature>
<feature type="binding site" evidence="1">
    <location>
        <position position="226"/>
    </location>
    <ligand>
        <name>Mn(2+)</name>
        <dbReference type="ChEBI" id="CHEBI:29035"/>
    </ligand>
</feature>
<feature type="binding site" evidence="1">
    <location>
        <begin position="243"/>
        <end position="251"/>
    </location>
    <ligand>
        <name>ATP</name>
        <dbReference type="ChEBI" id="CHEBI:30616"/>
    </ligand>
</feature>
<feature type="binding site" evidence="1">
    <location>
        <position position="264"/>
    </location>
    <ligand>
        <name>Mn(2+)</name>
        <dbReference type="ChEBI" id="CHEBI:29035"/>
    </ligand>
</feature>
<feature type="binding site" evidence="1">
    <location>
        <position position="292"/>
    </location>
    <ligand>
        <name>ATP</name>
        <dbReference type="ChEBI" id="CHEBI:30616"/>
    </ligand>
</feature>
<feature type="binding site" evidence="1">
    <location>
        <position position="328"/>
    </location>
    <ligand>
        <name>ATP</name>
        <dbReference type="ChEBI" id="CHEBI:30616"/>
    </ligand>
</feature>
<feature type="binding site" evidence="1">
    <location>
        <position position="328"/>
    </location>
    <ligand>
        <name>substrate</name>
    </ligand>
</feature>
<feature type="binding site" evidence="1">
    <location>
        <begin position="444"/>
        <end position="445"/>
    </location>
    <ligand>
        <name>ATP</name>
        <dbReference type="ChEBI" id="CHEBI:30616"/>
    </ligand>
</feature>
<feature type="binding site" evidence="1">
    <location>
        <position position="450"/>
    </location>
    <ligand>
        <name>ATP</name>
        <dbReference type="ChEBI" id="CHEBI:30616"/>
    </ligand>
</feature>
<protein>
    <recommendedName>
        <fullName evidence="1">Phosphoenolpyruvate carboxykinase (ATP)</fullName>
        <shortName evidence="1">PCK</shortName>
        <shortName evidence="1">PEP carboxykinase</shortName>
        <shortName evidence="1">PEPCK</shortName>
        <ecNumber evidence="1">4.1.1.49</ecNumber>
    </recommendedName>
</protein>
<name>PCKA_PORG3</name>
<proteinExistence type="inferred from homology"/>
<dbReference type="EC" id="4.1.1.49" evidence="1"/>
<dbReference type="EMBL" id="AP009380">
    <property type="protein sequence ID" value="BAG32953.1"/>
    <property type="molecule type" value="Genomic_DNA"/>
</dbReference>
<dbReference type="RefSeq" id="WP_012457504.1">
    <property type="nucleotide sequence ID" value="NC_010729.1"/>
</dbReference>
<dbReference type="SMR" id="B2RHV8"/>
<dbReference type="GeneID" id="29255670"/>
<dbReference type="KEGG" id="pgn:PGN_0434"/>
<dbReference type="eggNOG" id="COG1866">
    <property type="taxonomic scope" value="Bacteria"/>
</dbReference>
<dbReference type="HOGENOM" id="CLU_018247_0_1_10"/>
<dbReference type="OrthoDB" id="9806325at2"/>
<dbReference type="BioCyc" id="PGIN431947:G1G2V-475-MONOMER"/>
<dbReference type="UniPathway" id="UPA00138"/>
<dbReference type="Proteomes" id="UP000008842">
    <property type="component" value="Chromosome"/>
</dbReference>
<dbReference type="GO" id="GO:0005829">
    <property type="term" value="C:cytosol"/>
    <property type="evidence" value="ECO:0007669"/>
    <property type="project" value="TreeGrafter"/>
</dbReference>
<dbReference type="GO" id="GO:0005524">
    <property type="term" value="F:ATP binding"/>
    <property type="evidence" value="ECO:0007669"/>
    <property type="project" value="UniProtKB-UniRule"/>
</dbReference>
<dbReference type="GO" id="GO:0046872">
    <property type="term" value="F:metal ion binding"/>
    <property type="evidence" value="ECO:0007669"/>
    <property type="project" value="UniProtKB-KW"/>
</dbReference>
<dbReference type="GO" id="GO:0004612">
    <property type="term" value="F:phosphoenolpyruvate carboxykinase (ATP) activity"/>
    <property type="evidence" value="ECO:0007669"/>
    <property type="project" value="UniProtKB-UniRule"/>
</dbReference>
<dbReference type="GO" id="GO:0006094">
    <property type="term" value="P:gluconeogenesis"/>
    <property type="evidence" value="ECO:0007669"/>
    <property type="project" value="UniProtKB-UniRule"/>
</dbReference>
<dbReference type="CDD" id="cd00484">
    <property type="entry name" value="PEPCK_ATP"/>
    <property type="match status" value="1"/>
</dbReference>
<dbReference type="FunFam" id="2.170.8.10:FF:000001">
    <property type="entry name" value="Phosphoenolpyruvate carboxykinase (ATP)"/>
    <property type="match status" value="1"/>
</dbReference>
<dbReference type="FunFam" id="3.40.449.10:FF:000001">
    <property type="entry name" value="Phosphoenolpyruvate carboxykinase (ATP)"/>
    <property type="match status" value="1"/>
</dbReference>
<dbReference type="Gene3D" id="3.90.228.20">
    <property type="match status" value="1"/>
</dbReference>
<dbReference type="Gene3D" id="3.40.449.10">
    <property type="entry name" value="Phosphoenolpyruvate Carboxykinase, domain 1"/>
    <property type="match status" value="1"/>
</dbReference>
<dbReference type="Gene3D" id="2.170.8.10">
    <property type="entry name" value="Phosphoenolpyruvate Carboxykinase, domain 2"/>
    <property type="match status" value="1"/>
</dbReference>
<dbReference type="HAMAP" id="MF_00453">
    <property type="entry name" value="PEPCK_ATP"/>
    <property type="match status" value="1"/>
</dbReference>
<dbReference type="InterPro" id="IPR001272">
    <property type="entry name" value="PEP_carboxykinase_ATP"/>
</dbReference>
<dbReference type="InterPro" id="IPR013035">
    <property type="entry name" value="PEP_carboxykinase_C"/>
</dbReference>
<dbReference type="InterPro" id="IPR008210">
    <property type="entry name" value="PEP_carboxykinase_N"/>
</dbReference>
<dbReference type="InterPro" id="IPR015994">
    <property type="entry name" value="PEPCK_ATP_CS"/>
</dbReference>
<dbReference type="NCBIfam" id="TIGR00224">
    <property type="entry name" value="pckA"/>
    <property type="match status" value="1"/>
</dbReference>
<dbReference type="NCBIfam" id="NF006819">
    <property type="entry name" value="PRK09344.1-1"/>
    <property type="match status" value="1"/>
</dbReference>
<dbReference type="NCBIfam" id="NF006820">
    <property type="entry name" value="PRK09344.1-2"/>
    <property type="match status" value="1"/>
</dbReference>
<dbReference type="NCBIfam" id="NF006821">
    <property type="entry name" value="PRK09344.1-3"/>
    <property type="match status" value="1"/>
</dbReference>
<dbReference type="PANTHER" id="PTHR30031:SF0">
    <property type="entry name" value="PHOSPHOENOLPYRUVATE CARBOXYKINASE (ATP)"/>
    <property type="match status" value="1"/>
</dbReference>
<dbReference type="PANTHER" id="PTHR30031">
    <property type="entry name" value="PHOSPHOENOLPYRUVATE CARBOXYKINASE ATP"/>
    <property type="match status" value="1"/>
</dbReference>
<dbReference type="Pfam" id="PF01293">
    <property type="entry name" value="PEPCK_ATP"/>
    <property type="match status" value="1"/>
</dbReference>
<dbReference type="PIRSF" id="PIRSF006294">
    <property type="entry name" value="PEP_crbxkin"/>
    <property type="match status" value="1"/>
</dbReference>
<dbReference type="SUPFAM" id="SSF68923">
    <property type="entry name" value="PEP carboxykinase N-terminal domain"/>
    <property type="match status" value="1"/>
</dbReference>
<dbReference type="SUPFAM" id="SSF53795">
    <property type="entry name" value="PEP carboxykinase-like"/>
    <property type="match status" value="1"/>
</dbReference>
<dbReference type="PROSITE" id="PS00532">
    <property type="entry name" value="PEPCK_ATP"/>
    <property type="match status" value="1"/>
</dbReference>
<organism>
    <name type="scientific">Porphyromonas gingivalis (strain ATCC 33277 / DSM 20709 / CIP 103683 / JCM 12257 / NCTC 11834 / 2561)</name>
    <dbReference type="NCBI Taxonomy" id="431947"/>
    <lineage>
        <taxon>Bacteria</taxon>
        <taxon>Pseudomonadati</taxon>
        <taxon>Bacteroidota</taxon>
        <taxon>Bacteroidia</taxon>
        <taxon>Bacteroidales</taxon>
        <taxon>Porphyromonadaceae</taxon>
        <taxon>Porphyromonas</taxon>
    </lineage>
</organism>
<comment type="function">
    <text evidence="1">Involved in the gluconeogenesis. Catalyzes the conversion of oxaloacetate (OAA) to phosphoenolpyruvate (PEP) through direct phosphoryl transfer between the nucleoside triphosphate and OAA.</text>
</comment>
<comment type="catalytic activity">
    <reaction evidence="1">
        <text>oxaloacetate + ATP = phosphoenolpyruvate + ADP + CO2</text>
        <dbReference type="Rhea" id="RHEA:18617"/>
        <dbReference type="ChEBI" id="CHEBI:16452"/>
        <dbReference type="ChEBI" id="CHEBI:16526"/>
        <dbReference type="ChEBI" id="CHEBI:30616"/>
        <dbReference type="ChEBI" id="CHEBI:58702"/>
        <dbReference type="ChEBI" id="CHEBI:456216"/>
        <dbReference type="EC" id="4.1.1.49"/>
    </reaction>
</comment>
<comment type="cofactor">
    <cofactor evidence="1">
        <name>Mn(2+)</name>
        <dbReference type="ChEBI" id="CHEBI:29035"/>
    </cofactor>
    <text evidence="1">Binds 1 Mn(2+) ion per subunit.</text>
</comment>
<comment type="pathway">
    <text evidence="1">Carbohydrate biosynthesis; gluconeogenesis.</text>
</comment>
<comment type="subcellular location">
    <subcellularLocation>
        <location evidence="1">Cytoplasm</location>
    </subcellularLocation>
</comment>
<comment type="similarity">
    <text evidence="1">Belongs to the phosphoenolpyruvate carboxykinase (ATP) family.</text>
</comment>
<gene>
    <name evidence="1" type="primary">pckA</name>
    <name type="ordered locus">PGN_0434</name>
</gene>
<reference key="1">
    <citation type="journal article" date="2008" name="DNA Res.">
        <title>Determination of the genome sequence of Porphyromonas gingivalis strain ATCC 33277 and genomic comparison with strain W83 revealed extensive genome rearrangements in P. gingivalis.</title>
        <authorList>
            <person name="Naito M."/>
            <person name="Hirakawa H."/>
            <person name="Yamashita A."/>
            <person name="Ohara N."/>
            <person name="Shoji M."/>
            <person name="Yukitake H."/>
            <person name="Nakayama K."/>
            <person name="Toh H."/>
            <person name="Yoshimura F."/>
            <person name="Kuhara S."/>
            <person name="Hattori M."/>
            <person name="Hayashi T."/>
            <person name="Nakayama K."/>
        </authorList>
    </citation>
    <scope>NUCLEOTIDE SEQUENCE [LARGE SCALE GENOMIC DNA]</scope>
    <source>
        <strain>ATCC 33277 / DSM 20709 / CIP 103683 / JCM 12257 / NCTC 11834 / 2561</strain>
    </source>
</reference>
<evidence type="ECO:0000255" key="1">
    <source>
        <dbReference type="HAMAP-Rule" id="MF_00453"/>
    </source>
</evidence>
<keyword id="KW-0067">ATP-binding</keyword>
<keyword id="KW-0963">Cytoplasm</keyword>
<keyword id="KW-0210">Decarboxylase</keyword>
<keyword id="KW-0312">Gluconeogenesis</keyword>
<keyword id="KW-0456">Lyase</keyword>
<keyword id="KW-0464">Manganese</keyword>
<keyword id="KW-0479">Metal-binding</keyword>
<keyword id="KW-0547">Nucleotide-binding</keyword>
<sequence length="535" mass="59420">MSKLDLTKYGILNATEIIHNPSYEFLFEEETKAGLEGFEKGQLTELGAVNVMTGVYTGRSPKDKFFVMDDTTKNTIWWTSDEYKNDNKPVTPEAWKSIKKLAVEQLSGKRLFVVDTFCGANESSRLKIRFIMEVAWQAHFVKNMFIRPTEEELANYGEPDFVVMTASKAKVENYKELGLNSETAVVFNLTEKVQVILNTWYGGEMKKGMFSYMNYLLPLRGMASMHCSANTSMDEKETAIFFGLSGTGKTTLSTDPKRKLIGDDEHGWDKDGIFNFEGGCYAKVINLSRENEPDIYNAIRRNALLENVTVDAAGKIDFGDKSVTENTRVSYPIYHIENIVKPVSKAGHAKKVIFLSADAFGVLPPVSILTPEQTKYYFLSGFTAKLAGTERGITEPTPTFSACFGAAFLSLHPTKYAEELVKKMEMVGATAYLVNTGWNGTGKRISIKDTRGIIDAILDGSIDKAPTKAIPFFDFKVPTALPGVDPNILDPRDTYADAAEWTKKAKDLAERFIKNFVKFTGNDAGKALVAAGPKL</sequence>